<organism>
    <name type="scientific">Salmonella paratyphi C (strain RKS4594)</name>
    <dbReference type="NCBI Taxonomy" id="476213"/>
    <lineage>
        <taxon>Bacteria</taxon>
        <taxon>Pseudomonadati</taxon>
        <taxon>Pseudomonadota</taxon>
        <taxon>Gammaproteobacteria</taxon>
        <taxon>Enterobacterales</taxon>
        <taxon>Enterobacteriaceae</taxon>
        <taxon>Salmonella</taxon>
    </lineage>
</organism>
<evidence type="ECO:0000255" key="1">
    <source>
        <dbReference type="HAMAP-Rule" id="MF_01630"/>
    </source>
</evidence>
<reference key="1">
    <citation type="journal article" date="2009" name="PLoS ONE">
        <title>Salmonella paratyphi C: genetic divergence from Salmonella choleraesuis and pathogenic convergence with Salmonella typhi.</title>
        <authorList>
            <person name="Liu W.-Q."/>
            <person name="Feng Y."/>
            <person name="Wang Y."/>
            <person name="Zou Q.-H."/>
            <person name="Chen F."/>
            <person name="Guo J.-T."/>
            <person name="Peng Y.-H."/>
            <person name="Jin Y."/>
            <person name="Li Y.-G."/>
            <person name="Hu S.-N."/>
            <person name="Johnston R.N."/>
            <person name="Liu G.-R."/>
            <person name="Liu S.-L."/>
        </authorList>
    </citation>
    <scope>NUCLEOTIDE SEQUENCE [LARGE SCALE GENOMIC DNA]</scope>
    <source>
        <strain>RKS4594</strain>
    </source>
</reference>
<gene>
    <name evidence="1" type="primary">napA</name>
    <name type="ordered locus">SPC_1452</name>
</gene>
<protein>
    <recommendedName>
        <fullName evidence="1">Periplasmic nitrate reductase</fullName>
        <ecNumber evidence="1">1.9.6.1</ecNumber>
    </recommendedName>
</protein>
<feature type="signal peptide" description="Tat-type signal" evidence="1">
    <location>
        <begin position="1"/>
        <end position="31"/>
    </location>
</feature>
<feature type="chain" id="PRO_1000186373" description="Periplasmic nitrate reductase" evidence="1">
    <location>
        <begin position="32"/>
        <end position="828"/>
    </location>
</feature>
<feature type="domain" description="4Fe-4S Mo/W bis-MGD-type" evidence="1">
    <location>
        <begin position="39"/>
        <end position="95"/>
    </location>
</feature>
<feature type="binding site" evidence="1">
    <location>
        <position position="46"/>
    </location>
    <ligand>
        <name>[4Fe-4S] cluster</name>
        <dbReference type="ChEBI" id="CHEBI:49883"/>
    </ligand>
</feature>
<feature type="binding site" evidence="1">
    <location>
        <position position="49"/>
    </location>
    <ligand>
        <name>[4Fe-4S] cluster</name>
        <dbReference type="ChEBI" id="CHEBI:49883"/>
    </ligand>
</feature>
<feature type="binding site" evidence="1">
    <location>
        <position position="53"/>
    </location>
    <ligand>
        <name>[4Fe-4S] cluster</name>
        <dbReference type="ChEBI" id="CHEBI:49883"/>
    </ligand>
</feature>
<feature type="binding site" evidence="1">
    <location>
        <position position="81"/>
    </location>
    <ligand>
        <name>[4Fe-4S] cluster</name>
        <dbReference type="ChEBI" id="CHEBI:49883"/>
    </ligand>
</feature>
<feature type="binding site" evidence="1">
    <location>
        <position position="83"/>
    </location>
    <ligand>
        <name>Mo-bis(molybdopterin guanine dinucleotide)</name>
        <dbReference type="ChEBI" id="CHEBI:60539"/>
    </ligand>
</feature>
<feature type="binding site" evidence="1">
    <location>
        <position position="150"/>
    </location>
    <ligand>
        <name>Mo-bis(molybdopterin guanine dinucleotide)</name>
        <dbReference type="ChEBI" id="CHEBI:60539"/>
    </ligand>
</feature>
<feature type="binding site" evidence="1">
    <location>
        <position position="175"/>
    </location>
    <ligand>
        <name>Mo-bis(molybdopterin guanine dinucleotide)</name>
        <dbReference type="ChEBI" id="CHEBI:60539"/>
    </ligand>
</feature>
<feature type="binding site" evidence="1">
    <location>
        <position position="179"/>
    </location>
    <ligand>
        <name>Mo-bis(molybdopterin guanine dinucleotide)</name>
        <dbReference type="ChEBI" id="CHEBI:60539"/>
    </ligand>
</feature>
<feature type="binding site" evidence="1">
    <location>
        <begin position="212"/>
        <end position="219"/>
    </location>
    <ligand>
        <name>Mo-bis(molybdopterin guanine dinucleotide)</name>
        <dbReference type="ChEBI" id="CHEBI:60539"/>
    </ligand>
</feature>
<feature type="binding site" evidence="1">
    <location>
        <begin position="243"/>
        <end position="247"/>
    </location>
    <ligand>
        <name>Mo-bis(molybdopterin guanine dinucleotide)</name>
        <dbReference type="ChEBI" id="CHEBI:60539"/>
    </ligand>
</feature>
<feature type="binding site" evidence="1">
    <location>
        <begin position="262"/>
        <end position="264"/>
    </location>
    <ligand>
        <name>Mo-bis(molybdopterin guanine dinucleotide)</name>
        <dbReference type="ChEBI" id="CHEBI:60539"/>
    </ligand>
</feature>
<feature type="binding site" evidence="1">
    <location>
        <position position="372"/>
    </location>
    <ligand>
        <name>Mo-bis(molybdopterin guanine dinucleotide)</name>
        <dbReference type="ChEBI" id="CHEBI:60539"/>
    </ligand>
</feature>
<feature type="binding site" evidence="1">
    <location>
        <position position="376"/>
    </location>
    <ligand>
        <name>Mo-bis(molybdopterin guanine dinucleotide)</name>
        <dbReference type="ChEBI" id="CHEBI:60539"/>
    </ligand>
</feature>
<feature type="binding site" evidence="1">
    <location>
        <position position="482"/>
    </location>
    <ligand>
        <name>Mo-bis(molybdopterin guanine dinucleotide)</name>
        <dbReference type="ChEBI" id="CHEBI:60539"/>
    </ligand>
</feature>
<feature type="binding site" evidence="1">
    <location>
        <begin position="508"/>
        <end position="509"/>
    </location>
    <ligand>
        <name>Mo-bis(molybdopterin guanine dinucleotide)</name>
        <dbReference type="ChEBI" id="CHEBI:60539"/>
    </ligand>
</feature>
<feature type="binding site" evidence="1">
    <location>
        <position position="531"/>
    </location>
    <ligand>
        <name>Mo-bis(molybdopterin guanine dinucleotide)</name>
        <dbReference type="ChEBI" id="CHEBI:60539"/>
    </ligand>
</feature>
<feature type="binding site" evidence="1">
    <location>
        <position position="558"/>
    </location>
    <ligand>
        <name>Mo-bis(molybdopterin guanine dinucleotide)</name>
        <dbReference type="ChEBI" id="CHEBI:60539"/>
    </ligand>
</feature>
<feature type="binding site" evidence="1">
    <location>
        <begin position="718"/>
        <end position="727"/>
    </location>
    <ligand>
        <name>Mo-bis(molybdopterin guanine dinucleotide)</name>
        <dbReference type="ChEBI" id="CHEBI:60539"/>
    </ligand>
</feature>
<feature type="binding site" evidence="1">
    <location>
        <position position="794"/>
    </location>
    <ligand>
        <name>substrate</name>
    </ligand>
</feature>
<feature type="binding site" evidence="1">
    <location>
        <position position="802"/>
    </location>
    <ligand>
        <name>Mo-bis(molybdopterin guanine dinucleotide)</name>
        <dbReference type="ChEBI" id="CHEBI:60539"/>
    </ligand>
</feature>
<feature type="binding site" evidence="1">
    <location>
        <position position="819"/>
    </location>
    <ligand>
        <name>Mo-bis(molybdopterin guanine dinucleotide)</name>
        <dbReference type="ChEBI" id="CHEBI:60539"/>
    </ligand>
</feature>
<keyword id="KW-0004">4Fe-4S</keyword>
<keyword id="KW-0249">Electron transport</keyword>
<keyword id="KW-0408">Iron</keyword>
<keyword id="KW-0411">Iron-sulfur</keyword>
<keyword id="KW-0479">Metal-binding</keyword>
<keyword id="KW-0500">Molybdenum</keyword>
<keyword id="KW-0534">Nitrate assimilation</keyword>
<keyword id="KW-0560">Oxidoreductase</keyword>
<keyword id="KW-0574">Periplasm</keyword>
<keyword id="KW-0732">Signal</keyword>
<keyword id="KW-0813">Transport</keyword>
<comment type="function">
    <text evidence="1">Catalytic subunit of the periplasmic nitrate reductase complex NapAB. Receives electrons from NapB and catalyzes the reduction of nitrate to nitrite.</text>
</comment>
<comment type="catalytic activity">
    <reaction evidence="1">
        <text>2 Fe(II)-[cytochrome] + nitrate + 2 H(+) = 2 Fe(III)-[cytochrome] + nitrite + H2O</text>
        <dbReference type="Rhea" id="RHEA:12909"/>
        <dbReference type="Rhea" id="RHEA-COMP:11777"/>
        <dbReference type="Rhea" id="RHEA-COMP:11778"/>
        <dbReference type="ChEBI" id="CHEBI:15377"/>
        <dbReference type="ChEBI" id="CHEBI:15378"/>
        <dbReference type="ChEBI" id="CHEBI:16301"/>
        <dbReference type="ChEBI" id="CHEBI:17632"/>
        <dbReference type="ChEBI" id="CHEBI:29033"/>
        <dbReference type="ChEBI" id="CHEBI:29034"/>
        <dbReference type="EC" id="1.9.6.1"/>
    </reaction>
</comment>
<comment type="cofactor">
    <cofactor evidence="1">
        <name>[4Fe-4S] cluster</name>
        <dbReference type="ChEBI" id="CHEBI:49883"/>
    </cofactor>
    <text evidence="1">Binds 1 [4Fe-4S] cluster.</text>
</comment>
<comment type="cofactor">
    <cofactor evidence="1">
        <name>Mo-bis(molybdopterin guanine dinucleotide)</name>
        <dbReference type="ChEBI" id="CHEBI:60539"/>
    </cofactor>
    <text evidence="1">Binds 1 molybdenum-bis(molybdopterin guanine dinucleotide) (Mo-bis-MGD) cofactor per subunit.</text>
</comment>
<comment type="subunit">
    <text evidence="1">Component of the periplasmic nitrate reductase NapAB complex composed of NapA and NapB.</text>
</comment>
<comment type="subcellular location">
    <subcellularLocation>
        <location evidence="1">Periplasm</location>
    </subcellularLocation>
</comment>
<comment type="PTM">
    <text evidence="1">Predicted to be exported by the Tat system. The position of the signal peptide cleavage has not been experimentally proven.</text>
</comment>
<comment type="similarity">
    <text evidence="1">Belongs to the prokaryotic molybdopterin-containing oxidoreductase family. NasA/NapA/NarB subfamily.</text>
</comment>
<accession>C0Q0P2</accession>
<proteinExistence type="inferred from homology"/>
<sequence>MKLSRRSFMKANAVAAAAAAAGLSVPGVARAVVGQQEAIKWDKAPCRFCGTGCGVLVGTQQGRVVACQGDPDAPVNRGLNCIKGYFLPKIMYGKDRLTQPMLRMKDGSYHKDGEFTPVSWEQAFDVMEEKFKTSLKEKGPEAIGMFGSGQWTIWEGYAAAKLFKAGFRSNNIDPNARHCMASAVVGFMRTFGMDEPMGCYDDIEQADAFVLWGSNMAEMHPILWSRITNRRLSDPNVKVAVLSTFQHRSFELADNGIVFTPQSDLVILNYIANYIIQNNAVNQDFFTKHVNLRKGATDIGYGLRPTHPLEKAAKNPGSDASEPMSFDEYKAFVAEYTLDKTAEMTGVPKDQLEQLAQLYADPNKRVISYWTMGFNQHTRGVWANNLVYNLHLLTGKISQPGCGPFSLTGQPSACGTAREVGTFSHRLPADMVVTNEKHRDICEKHWQIPAGTIPAKVGLHAVAQDRALKDGKLNVYWVMCNNNMQAGPNINEDRMPGWRDPRNFIIVSDPYPTVSALSADLILPTAMWVEKEGAYGNAERRTQFWRQQIKAPGEAKSDLWQLVQFSRRFKTEEVWPEALLAQKPELRGKTLYDVLFATPAVSKFPLSELKEDQLNDESRELGFYLQKGLFEEYAWFGRGHGHDLAPFDDYHNARGLRWPVVEGKETQWRYSEGNDPYVKAGEGYKFYGKPDGKAVIFALPFEPAAESPDNEYDLWLSTGRVLEHWHTGSMTRRVLELHRAFPEAVVFIHPLDAKARDLRRGDKVKVSSRRGEVISIVETRGRNRPPQGLVYMPFFDAAQLVNNLTLDATDPLSKETDFKKCAVKLAKV</sequence>
<name>NAPA_SALPC</name>
<dbReference type="EC" id="1.9.6.1" evidence="1"/>
<dbReference type="EMBL" id="CP000857">
    <property type="protein sequence ID" value="ACN45611.1"/>
    <property type="molecule type" value="Genomic_DNA"/>
</dbReference>
<dbReference type="RefSeq" id="WP_000778095.1">
    <property type="nucleotide sequence ID" value="NC_012125.1"/>
</dbReference>
<dbReference type="SMR" id="C0Q0P2"/>
<dbReference type="KEGG" id="sei:SPC_1452"/>
<dbReference type="HOGENOM" id="CLU_000422_13_4_6"/>
<dbReference type="Proteomes" id="UP000001599">
    <property type="component" value="Chromosome"/>
</dbReference>
<dbReference type="GO" id="GO:0016020">
    <property type="term" value="C:membrane"/>
    <property type="evidence" value="ECO:0007669"/>
    <property type="project" value="TreeGrafter"/>
</dbReference>
<dbReference type="GO" id="GO:0009325">
    <property type="term" value="C:nitrate reductase complex"/>
    <property type="evidence" value="ECO:0007669"/>
    <property type="project" value="TreeGrafter"/>
</dbReference>
<dbReference type="GO" id="GO:0042597">
    <property type="term" value="C:periplasmic space"/>
    <property type="evidence" value="ECO:0007669"/>
    <property type="project" value="UniProtKB-SubCell"/>
</dbReference>
<dbReference type="GO" id="GO:0051539">
    <property type="term" value="F:4 iron, 4 sulfur cluster binding"/>
    <property type="evidence" value="ECO:0007669"/>
    <property type="project" value="UniProtKB-KW"/>
</dbReference>
<dbReference type="GO" id="GO:0009055">
    <property type="term" value="F:electron transfer activity"/>
    <property type="evidence" value="ECO:0007669"/>
    <property type="project" value="UniProtKB-UniRule"/>
</dbReference>
<dbReference type="GO" id="GO:0005506">
    <property type="term" value="F:iron ion binding"/>
    <property type="evidence" value="ECO:0007669"/>
    <property type="project" value="UniProtKB-UniRule"/>
</dbReference>
<dbReference type="GO" id="GO:0030151">
    <property type="term" value="F:molybdenum ion binding"/>
    <property type="evidence" value="ECO:0007669"/>
    <property type="project" value="InterPro"/>
</dbReference>
<dbReference type="GO" id="GO:0043546">
    <property type="term" value="F:molybdopterin cofactor binding"/>
    <property type="evidence" value="ECO:0007669"/>
    <property type="project" value="InterPro"/>
</dbReference>
<dbReference type="GO" id="GO:0050140">
    <property type="term" value="F:nitrate reductase (cytochrome) activity"/>
    <property type="evidence" value="ECO:0007669"/>
    <property type="project" value="UniProtKB-EC"/>
</dbReference>
<dbReference type="GO" id="GO:0045333">
    <property type="term" value="P:cellular respiration"/>
    <property type="evidence" value="ECO:0007669"/>
    <property type="project" value="UniProtKB-ARBA"/>
</dbReference>
<dbReference type="GO" id="GO:0006777">
    <property type="term" value="P:Mo-molybdopterin cofactor biosynthetic process"/>
    <property type="evidence" value="ECO:0007669"/>
    <property type="project" value="UniProtKB-UniRule"/>
</dbReference>
<dbReference type="GO" id="GO:0042128">
    <property type="term" value="P:nitrate assimilation"/>
    <property type="evidence" value="ECO:0007669"/>
    <property type="project" value="UniProtKB-UniRule"/>
</dbReference>
<dbReference type="CDD" id="cd02791">
    <property type="entry name" value="MopB_CT_Nitrate-R-NapA-like"/>
    <property type="match status" value="1"/>
</dbReference>
<dbReference type="CDD" id="cd02754">
    <property type="entry name" value="MopB_Nitrate-R-NapA-like"/>
    <property type="match status" value="1"/>
</dbReference>
<dbReference type="FunFam" id="2.40.40.20:FF:000005">
    <property type="entry name" value="Periplasmic nitrate reductase"/>
    <property type="match status" value="1"/>
</dbReference>
<dbReference type="FunFam" id="3.40.228.10:FF:000001">
    <property type="entry name" value="Periplasmic nitrate reductase"/>
    <property type="match status" value="1"/>
</dbReference>
<dbReference type="Gene3D" id="2.40.40.20">
    <property type="match status" value="1"/>
</dbReference>
<dbReference type="Gene3D" id="3.30.200.210">
    <property type="match status" value="1"/>
</dbReference>
<dbReference type="Gene3D" id="3.40.50.740">
    <property type="match status" value="1"/>
</dbReference>
<dbReference type="Gene3D" id="3.40.228.10">
    <property type="entry name" value="Dimethylsulfoxide Reductase, domain 2"/>
    <property type="match status" value="1"/>
</dbReference>
<dbReference type="HAMAP" id="MF_01630">
    <property type="entry name" value="Nitrate_reduct_NapA"/>
    <property type="match status" value="1"/>
</dbReference>
<dbReference type="InterPro" id="IPR009010">
    <property type="entry name" value="Asp_de-COase-like_dom_sf"/>
</dbReference>
<dbReference type="InterPro" id="IPR041957">
    <property type="entry name" value="CT_Nitrate-R-NapA-like"/>
</dbReference>
<dbReference type="InterPro" id="IPR006657">
    <property type="entry name" value="MoPterin_dinucl-bd_dom"/>
</dbReference>
<dbReference type="InterPro" id="IPR006656">
    <property type="entry name" value="Mopterin_OxRdtase"/>
</dbReference>
<dbReference type="InterPro" id="IPR006963">
    <property type="entry name" value="Mopterin_OxRdtase_4Fe-4S_dom"/>
</dbReference>
<dbReference type="InterPro" id="IPR027467">
    <property type="entry name" value="MopterinOxRdtase_cofactor_BS"/>
</dbReference>
<dbReference type="InterPro" id="IPR010051">
    <property type="entry name" value="Periplasm_NO3_reductase_lsu"/>
</dbReference>
<dbReference type="InterPro" id="IPR050123">
    <property type="entry name" value="Prok_molybdopt-oxidoreductase"/>
</dbReference>
<dbReference type="InterPro" id="IPR006311">
    <property type="entry name" value="TAT_signal"/>
</dbReference>
<dbReference type="InterPro" id="IPR019546">
    <property type="entry name" value="TAT_signal_bac_arc"/>
</dbReference>
<dbReference type="NCBIfam" id="TIGR01706">
    <property type="entry name" value="NAPA"/>
    <property type="match status" value="1"/>
</dbReference>
<dbReference type="NCBIfam" id="NF010055">
    <property type="entry name" value="PRK13532.1"/>
    <property type="match status" value="1"/>
</dbReference>
<dbReference type="NCBIfam" id="TIGR01409">
    <property type="entry name" value="TAT_signal_seq"/>
    <property type="match status" value="1"/>
</dbReference>
<dbReference type="PANTHER" id="PTHR43105:SF11">
    <property type="entry name" value="PERIPLASMIC NITRATE REDUCTASE"/>
    <property type="match status" value="1"/>
</dbReference>
<dbReference type="PANTHER" id="PTHR43105">
    <property type="entry name" value="RESPIRATORY NITRATE REDUCTASE"/>
    <property type="match status" value="1"/>
</dbReference>
<dbReference type="Pfam" id="PF04879">
    <property type="entry name" value="Molybdop_Fe4S4"/>
    <property type="match status" value="1"/>
</dbReference>
<dbReference type="Pfam" id="PF00384">
    <property type="entry name" value="Molybdopterin"/>
    <property type="match status" value="1"/>
</dbReference>
<dbReference type="Pfam" id="PF01568">
    <property type="entry name" value="Molydop_binding"/>
    <property type="match status" value="1"/>
</dbReference>
<dbReference type="SMART" id="SM00926">
    <property type="entry name" value="Molybdop_Fe4S4"/>
    <property type="match status" value="1"/>
</dbReference>
<dbReference type="SUPFAM" id="SSF50692">
    <property type="entry name" value="ADC-like"/>
    <property type="match status" value="1"/>
</dbReference>
<dbReference type="SUPFAM" id="SSF53706">
    <property type="entry name" value="Formate dehydrogenase/DMSO reductase, domains 1-3"/>
    <property type="match status" value="1"/>
</dbReference>
<dbReference type="PROSITE" id="PS51669">
    <property type="entry name" value="4FE4S_MOW_BIS_MGD"/>
    <property type="match status" value="1"/>
</dbReference>
<dbReference type="PROSITE" id="PS00551">
    <property type="entry name" value="MOLYBDOPTERIN_PROK_1"/>
    <property type="match status" value="1"/>
</dbReference>
<dbReference type="PROSITE" id="PS51318">
    <property type="entry name" value="TAT"/>
    <property type="match status" value="1"/>
</dbReference>